<name>QUEA_PSYCK</name>
<proteinExistence type="inferred from homology"/>
<accession>Q1QAG2</accession>
<protein>
    <recommendedName>
        <fullName evidence="1">S-adenosylmethionine:tRNA ribosyltransferase-isomerase</fullName>
        <ecNumber evidence="1">2.4.99.17</ecNumber>
    </recommendedName>
    <alternativeName>
        <fullName evidence="1">Queuosine biosynthesis protein QueA</fullName>
    </alternativeName>
</protein>
<gene>
    <name evidence="1" type="primary">queA</name>
    <name type="ordered locus">Pcryo_1564</name>
</gene>
<keyword id="KW-0963">Cytoplasm</keyword>
<keyword id="KW-0671">Queuosine biosynthesis</keyword>
<keyword id="KW-0949">S-adenosyl-L-methionine</keyword>
<keyword id="KW-0808">Transferase</keyword>
<comment type="function">
    <text evidence="1">Transfers and isomerizes the ribose moiety from AdoMet to the 7-aminomethyl group of 7-deazaguanine (preQ1-tRNA) to give epoxyqueuosine (oQ-tRNA).</text>
</comment>
<comment type="catalytic activity">
    <reaction evidence="1">
        <text>7-aminomethyl-7-carbaguanosine(34) in tRNA + S-adenosyl-L-methionine = epoxyqueuosine(34) in tRNA + adenine + L-methionine + 2 H(+)</text>
        <dbReference type="Rhea" id="RHEA:32155"/>
        <dbReference type="Rhea" id="RHEA-COMP:10342"/>
        <dbReference type="Rhea" id="RHEA-COMP:18582"/>
        <dbReference type="ChEBI" id="CHEBI:15378"/>
        <dbReference type="ChEBI" id="CHEBI:16708"/>
        <dbReference type="ChEBI" id="CHEBI:57844"/>
        <dbReference type="ChEBI" id="CHEBI:59789"/>
        <dbReference type="ChEBI" id="CHEBI:82833"/>
        <dbReference type="ChEBI" id="CHEBI:194443"/>
        <dbReference type="EC" id="2.4.99.17"/>
    </reaction>
</comment>
<comment type="pathway">
    <text evidence="1">tRNA modification; tRNA-queuosine biosynthesis.</text>
</comment>
<comment type="subunit">
    <text evidence="1">Monomer.</text>
</comment>
<comment type="subcellular location">
    <subcellularLocation>
        <location evidence="1">Cytoplasm</location>
    </subcellularLocation>
</comment>
<comment type="similarity">
    <text evidence="1">Belongs to the QueA family.</text>
</comment>
<dbReference type="EC" id="2.4.99.17" evidence="1"/>
<dbReference type="EMBL" id="CP000323">
    <property type="protein sequence ID" value="ABE75341.1"/>
    <property type="molecule type" value="Genomic_DNA"/>
</dbReference>
<dbReference type="RefSeq" id="WP_011513893.1">
    <property type="nucleotide sequence ID" value="NC_007969.1"/>
</dbReference>
<dbReference type="SMR" id="Q1QAG2"/>
<dbReference type="STRING" id="335284.Pcryo_1564"/>
<dbReference type="KEGG" id="pcr:Pcryo_1564"/>
<dbReference type="eggNOG" id="COG0809">
    <property type="taxonomic scope" value="Bacteria"/>
</dbReference>
<dbReference type="HOGENOM" id="CLU_039110_1_0_6"/>
<dbReference type="UniPathway" id="UPA00392"/>
<dbReference type="Proteomes" id="UP000002425">
    <property type="component" value="Chromosome"/>
</dbReference>
<dbReference type="GO" id="GO:0005737">
    <property type="term" value="C:cytoplasm"/>
    <property type="evidence" value="ECO:0007669"/>
    <property type="project" value="UniProtKB-SubCell"/>
</dbReference>
<dbReference type="GO" id="GO:0051075">
    <property type="term" value="F:S-adenosylmethionine:tRNA ribosyltransferase-isomerase activity"/>
    <property type="evidence" value="ECO:0007669"/>
    <property type="project" value="UniProtKB-EC"/>
</dbReference>
<dbReference type="GO" id="GO:0008616">
    <property type="term" value="P:queuosine biosynthetic process"/>
    <property type="evidence" value="ECO:0007669"/>
    <property type="project" value="UniProtKB-UniRule"/>
</dbReference>
<dbReference type="GO" id="GO:0002099">
    <property type="term" value="P:tRNA wobble guanine modification"/>
    <property type="evidence" value="ECO:0007669"/>
    <property type="project" value="TreeGrafter"/>
</dbReference>
<dbReference type="FunFam" id="3.40.1780.10:FF:000001">
    <property type="entry name" value="S-adenosylmethionine:tRNA ribosyltransferase-isomerase"/>
    <property type="match status" value="1"/>
</dbReference>
<dbReference type="Gene3D" id="2.40.10.240">
    <property type="entry name" value="QueA-like"/>
    <property type="match status" value="1"/>
</dbReference>
<dbReference type="Gene3D" id="3.40.1780.10">
    <property type="entry name" value="QueA-like"/>
    <property type="match status" value="1"/>
</dbReference>
<dbReference type="HAMAP" id="MF_00113">
    <property type="entry name" value="QueA"/>
    <property type="match status" value="1"/>
</dbReference>
<dbReference type="InterPro" id="IPR003699">
    <property type="entry name" value="QueA"/>
</dbReference>
<dbReference type="InterPro" id="IPR042118">
    <property type="entry name" value="QueA_dom1"/>
</dbReference>
<dbReference type="InterPro" id="IPR042119">
    <property type="entry name" value="QueA_dom2"/>
</dbReference>
<dbReference type="InterPro" id="IPR036100">
    <property type="entry name" value="QueA_sf"/>
</dbReference>
<dbReference type="NCBIfam" id="NF001140">
    <property type="entry name" value="PRK00147.1"/>
    <property type="match status" value="1"/>
</dbReference>
<dbReference type="NCBIfam" id="TIGR00113">
    <property type="entry name" value="queA"/>
    <property type="match status" value="1"/>
</dbReference>
<dbReference type="PANTHER" id="PTHR30307">
    <property type="entry name" value="S-ADENOSYLMETHIONINE:TRNA RIBOSYLTRANSFERASE-ISOMERASE"/>
    <property type="match status" value="1"/>
</dbReference>
<dbReference type="PANTHER" id="PTHR30307:SF0">
    <property type="entry name" value="S-ADENOSYLMETHIONINE:TRNA RIBOSYLTRANSFERASE-ISOMERASE"/>
    <property type="match status" value="1"/>
</dbReference>
<dbReference type="Pfam" id="PF02547">
    <property type="entry name" value="Queuosine_synth"/>
    <property type="match status" value="1"/>
</dbReference>
<dbReference type="SUPFAM" id="SSF111337">
    <property type="entry name" value="QueA-like"/>
    <property type="match status" value="1"/>
</dbReference>
<organism>
    <name type="scientific">Psychrobacter cryohalolentis (strain ATCC BAA-1226 / DSM 17306 / VKM B-2378 / K5)</name>
    <dbReference type="NCBI Taxonomy" id="335284"/>
    <lineage>
        <taxon>Bacteria</taxon>
        <taxon>Pseudomonadati</taxon>
        <taxon>Pseudomonadota</taxon>
        <taxon>Gammaproteobacteria</taxon>
        <taxon>Moraxellales</taxon>
        <taxon>Moraxellaceae</taxon>
        <taxon>Psychrobacter</taxon>
    </lineage>
</organism>
<feature type="chain" id="PRO_1000117536" description="S-adenosylmethionine:tRNA ribosyltransferase-isomerase">
    <location>
        <begin position="1"/>
        <end position="405"/>
    </location>
</feature>
<sequence>MTDSEPQTLNNNSEITASHNDDILEYLSVDDYDYELPDQLIARYPLAQRSASKLLYLRANNANSQVEVEDKLFSELPELLNAGDLIVFNDTKVMKARLFGQKDTGGKIEVLIERLVALSDLNSADLDTITSNSDIIDMTVIAEKHIALCHVKASKALKLGQGLVLADGHMTGVMIGRQENLFILAFDTPILPDLELYGELPIPPYFERHADATDNTRYQTVFHDPAKLASVAAPTASLHFDDIVLEKLAAKGIQTAFVTLHVGAGTFAPVKTENLLNHTMHSEYAHLPQATADLINQTHANGKQVIAIGTTVTRVLETAYQQTAVDRQPLSGWAGDTEIFIYPGFEFGVVDKLLTNFHLPKSTLLMLVSAFATKKSIEEAYQHAIESEYRFFSYGDAMLLDKKVD</sequence>
<evidence type="ECO:0000255" key="1">
    <source>
        <dbReference type="HAMAP-Rule" id="MF_00113"/>
    </source>
</evidence>
<reference key="1">
    <citation type="submission" date="2006-03" db="EMBL/GenBank/DDBJ databases">
        <title>Complete sequence of chromosome of Psychrobacter cryohalolentis K5.</title>
        <authorList>
            <consortium name="US DOE Joint Genome Institute"/>
            <person name="Copeland A."/>
            <person name="Lucas S."/>
            <person name="Lapidus A."/>
            <person name="Barry K."/>
            <person name="Detter J.C."/>
            <person name="Glavina T."/>
            <person name="Hammon N."/>
            <person name="Israni S."/>
            <person name="Dalin E."/>
            <person name="Tice H."/>
            <person name="Pitluck S."/>
            <person name="Brettin T."/>
            <person name="Bruce D."/>
            <person name="Han C."/>
            <person name="Tapia R."/>
            <person name="Sims D.R."/>
            <person name="Gilna P."/>
            <person name="Schmutz J."/>
            <person name="Larimer F."/>
            <person name="Land M."/>
            <person name="Hauser L."/>
            <person name="Kyrpides N."/>
            <person name="Kim E."/>
            <person name="Richardson P."/>
        </authorList>
    </citation>
    <scope>NUCLEOTIDE SEQUENCE [LARGE SCALE GENOMIC DNA]</scope>
    <source>
        <strain>ATCC BAA-1226 / DSM 17306 / VKM B-2378 / K5</strain>
    </source>
</reference>